<dbReference type="EC" id="3.1.26.4" evidence="1"/>
<dbReference type="EMBL" id="CP000931">
    <property type="protein sequence ID" value="ABZ76439.1"/>
    <property type="molecule type" value="Genomic_DNA"/>
</dbReference>
<dbReference type="RefSeq" id="WP_012276971.1">
    <property type="nucleotide sequence ID" value="NC_010334.1"/>
</dbReference>
<dbReference type="SMR" id="B0TRM1"/>
<dbReference type="STRING" id="458817.Shal_1874"/>
<dbReference type="KEGG" id="shl:Shal_1874"/>
<dbReference type="eggNOG" id="COG0328">
    <property type="taxonomic scope" value="Bacteria"/>
</dbReference>
<dbReference type="HOGENOM" id="CLU_030894_6_0_6"/>
<dbReference type="OrthoDB" id="7845843at2"/>
<dbReference type="Proteomes" id="UP000001317">
    <property type="component" value="Chromosome"/>
</dbReference>
<dbReference type="GO" id="GO:0005737">
    <property type="term" value="C:cytoplasm"/>
    <property type="evidence" value="ECO:0007669"/>
    <property type="project" value="UniProtKB-SubCell"/>
</dbReference>
<dbReference type="GO" id="GO:0000287">
    <property type="term" value="F:magnesium ion binding"/>
    <property type="evidence" value="ECO:0007669"/>
    <property type="project" value="UniProtKB-UniRule"/>
</dbReference>
<dbReference type="GO" id="GO:0003676">
    <property type="term" value="F:nucleic acid binding"/>
    <property type="evidence" value="ECO:0007669"/>
    <property type="project" value="InterPro"/>
</dbReference>
<dbReference type="GO" id="GO:0004523">
    <property type="term" value="F:RNA-DNA hybrid ribonuclease activity"/>
    <property type="evidence" value="ECO:0007669"/>
    <property type="project" value="UniProtKB-UniRule"/>
</dbReference>
<dbReference type="GO" id="GO:0043137">
    <property type="term" value="P:DNA replication, removal of RNA primer"/>
    <property type="evidence" value="ECO:0007669"/>
    <property type="project" value="TreeGrafter"/>
</dbReference>
<dbReference type="CDD" id="cd09278">
    <property type="entry name" value="RNase_HI_prokaryote_like"/>
    <property type="match status" value="1"/>
</dbReference>
<dbReference type="FunFam" id="3.30.420.10:FF:000008">
    <property type="entry name" value="Ribonuclease H"/>
    <property type="match status" value="1"/>
</dbReference>
<dbReference type="Gene3D" id="3.30.420.10">
    <property type="entry name" value="Ribonuclease H-like superfamily/Ribonuclease H"/>
    <property type="match status" value="1"/>
</dbReference>
<dbReference type="HAMAP" id="MF_00042">
    <property type="entry name" value="RNase_H"/>
    <property type="match status" value="1"/>
</dbReference>
<dbReference type="InterPro" id="IPR050092">
    <property type="entry name" value="RNase_H"/>
</dbReference>
<dbReference type="InterPro" id="IPR012337">
    <property type="entry name" value="RNaseH-like_sf"/>
</dbReference>
<dbReference type="InterPro" id="IPR002156">
    <property type="entry name" value="RNaseH_domain"/>
</dbReference>
<dbReference type="InterPro" id="IPR036397">
    <property type="entry name" value="RNaseH_sf"/>
</dbReference>
<dbReference type="InterPro" id="IPR022892">
    <property type="entry name" value="RNaseHI"/>
</dbReference>
<dbReference type="NCBIfam" id="NF001236">
    <property type="entry name" value="PRK00203.1"/>
    <property type="match status" value="1"/>
</dbReference>
<dbReference type="PANTHER" id="PTHR10642">
    <property type="entry name" value="RIBONUCLEASE H1"/>
    <property type="match status" value="1"/>
</dbReference>
<dbReference type="PANTHER" id="PTHR10642:SF26">
    <property type="entry name" value="RIBONUCLEASE H1"/>
    <property type="match status" value="1"/>
</dbReference>
<dbReference type="Pfam" id="PF00075">
    <property type="entry name" value="RNase_H"/>
    <property type="match status" value="1"/>
</dbReference>
<dbReference type="SUPFAM" id="SSF53098">
    <property type="entry name" value="Ribonuclease H-like"/>
    <property type="match status" value="1"/>
</dbReference>
<dbReference type="PROSITE" id="PS50879">
    <property type="entry name" value="RNASE_H_1"/>
    <property type="match status" value="1"/>
</dbReference>
<name>RNH_SHEHH</name>
<sequence length="161" mass="18050">MTGLKQISIYTDGSCLGNPGPGGYGIVLKYKKQTKELADGFALTTNNRMELLAPIVALEVLKVPCQVILTSDSQYMRQGITQWIHGWKRKGWLTSAGQPVKNVDLWKRLDTVSQRHQIDWRWVKGHAGHTENERCDDLARQAAEAKPSQEDSGYINQQAQA</sequence>
<organism>
    <name type="scientific">Shewanella halifaxensis (strain HAW-EB4)</name>
    <dbReference type="NCBI Taxonomy" id="458817"/>
    <lineage>
        <taxon>Bacteria</taxon>
        <taxon>Pseudomonadati</taxon>
        <taxon>Pseudomonadota</taxon>
        <taxon>Gammaproteobacteria</taxon>
        <taxon>Alteromonadales</taxon>
        <taxon>Shewanellaceae</taxon>
        <taxon>Shewanella</taxon>
    </lineage>
</organism>
<gene>
    <name evidence="1" type="primary">rnhA</name>
    <name type="ordered locus">Shal_1874</name>
</gene>
<feature type="chain" id="PRO_1000116584" description="Ribonuclease H">
    <location>
        <begin position="1"/>
        <end position="161"/>
    </location>
</feature>
<feature type="domain" description="RNase H type-1" evidence="2">
    <location>
        <begin position="3"/>
        <end position="144"/>
    </location>
</feature>
<feature type="region of interest" description="Disordered" evidence="3">
    <location>
        <begin position="133"/>
        <end position="161"/>
    </location>
</feature>
<feature type="compositionally biased region" description="Polar residues" evidence="3">
    <location>
        <begin position="150"/>
        <end position="161"/>
    </location>
</feature>
<feature type="binding site" evidence="1">
    <location>
        <position position="12"/>
    </location>
    <ligand>
        <name>Mg(2+)</name>
        <dbReference type="ChEBI" id="CHEBI:18420"/>
        <label>1</label>
    </ligand>
</feature>
<feature type="binding site" evidence="1">
    <location>
        <position position="12"/>
    </location>
    <ligand>
        <name>Mg(2+)</name>
        <dbReference type="ChEBI" id="CHEBI:18420"/>
        <label>2</label>
    </ligand>
</feature>
<feature type="binding site" evidence="1">
    <location>
        <position position="50"/>
    </location>
    <ligand>
        <name>Mg(2+)</name>
        <dbReference type="ChEBI" id="CHEBI:18420"/>
        <label>1</label>
    </ligand>
</feature>
<feature type="binding site" evidence="1">
    <location>
        <position position="72"/>
    </location>
    <ligand>
        <name>Mg(2+)</name>
        <dbReference type="ChEBI" id="CHEBI:18420"/>
        <label>1</label>
    </ligand>
</feature>
<feature type="binding site" evidence="1">
    <location>
        <position position="136"/>
    </location>
    <ligand>
        <name>Mg(2+)</name>
        <dbReference type="ChEBI" id="CHEBI:18420"/>
        <label>2</label>
    </ligand>
</feature>
<keyword id="KW-0963">Cytoplasm</keyword>
<keyword id="KW-0255">Endonuclease</keyword>
<keyword id="KW-0378">Hydrolase</keyword>
<keyword id="KW-0460">Magnesium</keyword>
<keyword id="KW-0479">Metal-binding</keyword>
<keyword id="KW-0540">Nuclease</keyword>
<accession>B0TRM1</accession>
<comment type="function">
    <text evidence="1">Endonuclease that specifically degrades the RNA of RNA-DNA hybrids.</text>
</comment>
<comment type="catalytic activity">
    <reaction evidence="1">
        <text>Endonucleolytic cleavage to 5'-phosphomonoester.</text>
        <dbReference type="EC" id="3.1.26.4"/>
    </reaction>
</comment>
<comment type="cofactor">
    <cofactor evidence="1">
        <name>Mg(2+)</name>
        <dbReference type="ChEBI" id="CHEBI:18420"/>
    </cofactor>
    <text evidence="1">Binds 1 Mg(2+) ion per subunit. May bind a second metal ion at a regulatory site, or after substrate binding.</text>
</comment>
<comment type="subunit">
    <text evidence="1">Monomer.</text>
</comment>
<comment type="subcellular location">
    <subcellularLocation>
        <location evidence="1">Cytoplasm</location>
    </subcellularLocation>
</comment>
<comment type="similarity">
    <text evidence="1">Belongs to the RNase H family.</text>
</comment>
<evidence type="ECO:0000255" key="1">
    <source>
        <dbReference type="HAMAP-Rule" id="MF_00042"/>
    </source>
</evidence>
<evidence type="ECO:0000255" key="2">
    <source>
        <dbReference type="PROSITE-ProRule" id="PRU00408"/>
    </source>
</evidence>
<evidence type="ECO:0000256" key="3">
    <source>
        <dbReference type="SAM" id="MobiDB-lite"/>
    </source>
</evidence>
<protein>
    <recommendedName>
        <fullName evidence="1">Ribonuclease H</fullName>
        <shortName evidence="1">RNase H</shortName>
        <ecNumber evidence="1">3.1.26.4</ecNumber>
    </recommendedName>
</protein>
<reference key="1">
    <citation type="submission" date="2008-01" db="EMBL/GenBank/DDBJ databases">
        <title>Complete sequence of Shewanella halifaxensis HAW-EB4.</title>
        <authorList>
            <consortium name="US DOE Joint Genome Institute"/>
            <person name="Copeland A."/>
            <person name="Lucas S."/>
            <person name="Lapidus A."/>
            <person name="Glavina del Rio T."/>
            <person name="Dalin E."/>
            <person name="Tice H."/>
            <person name="Bruce D."/>
            <person name="Goodwin L."/>
            <person name="Pitluck S."/>
            <person name="Sims D."/>
            <person name="Brettin T."/>
            <person name="Detter J.C."/>
            <person name="Han C."/>
            <person name="Kuske C.R."/>
            <person name="Schmutz J."/>
            <person name="Larimer F."/>
            <person name="Land M."/>
            <person name="Hauser L."/>
            <person name="Kyrpides N."/>
            <person name="Kim E."/>
            <person name="Zhao J.-S."/>
            <person name="Richardson P."/>
        </authorList>
    </citation>
    <scope>NUCLEOTIDE SEQUENCE [LARGE SCALE GENOMIC DNA]</scope>
    <source>
        <strain>HAW-EB4</strain>
    </source>
</reference>
<proteinExistence type="inferred from homology"/>